<feature type="chain" id="PRO_0000151894" description="ATP phosphoribosyltransferase">
    <location>
        <begin position="1"/>
        <end position="211"/>
    </location>
</feature>
<keyword id="KW-0028">Amino-acid biosynthesis</keyword>
<keyword id="KW-0067">ATP-binding</keyword>
<keyword id="KW-0963">Cytoplasm</keyword>
<keyword id="KW-0328">Glycosyltransferase</keyword>
<keyword id="KW-0368">Histidine biosynthesis</keyword>
<keyword id="KW-0547">Nucleotide-binding</keyword>
<keyword id="KW-1185">Reference proteome</keyword>
<keyword id="KW-0808">Transferase</keyword>
<reference key="1">
    <citation type="journal article" date="2003" name="Nature">
        <title>The genome sequence of Bacillus anthracis Ames and comparison to closely related bacteria.</title>
        <authorList>
            <person name="Read T.D."/>
            <person name="Peterson S.N."/>
            <person name="Tourasse N.J."/>
            <person name="Baillie L.W."/>
            <person name="Paulsen I.T."/>
            <person name="Nelson K.E."/>
            <person name="Tettelin H."/>
            <person name="Fouts D.E."/>
            <person name="Eisen J.A."/>
            <person name="Gill S.R."/>
            <person name="Holtzapple E.K."/>
            <person name="Okstad O.A."/>
            <person name="Helgason E."/>
            <person name="Rilstone J."/>
            <person name="Wu M."/>
            <person name="Kolonay J.F."/>
            <person name="Beanan M.J."/>
            <person name="Dodson R.J."/>
            <person name="Brinkac L.M."/>
            <person name="Gwinn M.L."/>
            <person name="DeBoy R.T."/>
            <person name="Madpu R."/>
            <person name="Daugherty S.C."/>
            <person name="Durkin A.S."/>
            <person name="Haft D.H."/>
            <person name="Nelson W.C."/>
            <person name="Peterson J.D."/>
            <person name="Pop M."/>
            <person name="Khouri H.M."/>
            <person name="Radune D."/>
            <person name="Benton J.L."/>
            <person name="Mahamoud Y."/>
            <person name="Jiang L."/>
            <person name="Hance I.R."/>
            <person name="Weidman J.F."/>
            <person name="Berry K.J."/>
            <person name="Plaut R.D."/>
            <person name="Wolf A.M."/>
            <person name="Watkins K.L."/>
            <person name="Nierman W.C."/>
            <person name="Hazen A."/>
            <person name="Cline R.T."/>
            <person name="Redmond C."/>
            <person name="Thwaite J.E."/>
            <person name="White O."/>
            <person name="Salzberg S.L."/>
            <person name="Thomason B."/>
            <person name="Friedlander A.M."/>
            <person name="Koehler T.M."/>
            <person name="Hanna P.C."/>
            <person name="Kolstoe A.-B."/>
            <person name="Fraser C.M."/>
        </authorList>
    </citation>
    <scope>NUCLEOTIDE SEQUENCE [LARGE SCALE GENOMIC DNA]</scope>
    <source>
        <strain>Ames / isolate Porton</strain>
    </source>
</reference>
<reference key="2">
    <citation type="journal article" date="2009" name="J. Bacteriol.">
        <title>The complete genome sequence of Bacillus anthracis Ames 'Ancestor'.</title>
        <authorList>
            <person name="Ravel J."/>
            <person name="Jiang L."/>
            <person name="Stanley S.T."/>
            <person name="Wilson M.R."/>
            <person name="Decker R.S."/>
            <person name="Read T.D."/>
            <person name="Worsham P."/>
            <person name="Keim P.S."/>
            <person name="Salzberg S.L."/>
            <person name="Fraser-Liggett C.M."/>
            <person name="Rasko D.A."/>
        </authorList>
    </citation>
    <scope>NUCLEOTIDE SEQUENCE [LARGE SCALE GENOMIC DNA]</scope>
    <source>
        <strain>Ames ancestor</strain>
    </source>
</reference>
<reference key="3">
    <citation type="submission" date="2004-01" db="EMBL/GenBank/DDBJ databases">
        <title>Complete genome sequence of Bacillus anthracis Sterne.</title>
        <authorList>
            <person name="Brettin T.S."/>
            <person name="Bruce D."/>
            <person name="Challacombe J.F."/>
            <person name="Gilna P."/>
            <person name="Han C."/>
            <person name="Hill K."/>
            <person name="Hitchcock P."/>
            <person name="Jackson P."/>
            <person name="Keim P."/>
            <person name="Longmire J."/>
            <person name="Lucas S."/>
            <person name="Okinaka R."/>
            <person name="Richardson P."/>
            <person name="Rubin E."/>
            <person name="Tice H."/>
        </authorList>
    </citation>
    <scope>NUCLEOTIDE SEQUENCE [LARGE SCALE GENOMIC DNA]</scope>
    <source>
        <strain>Sterne</strain>
    </source>
</reference>
<sequence>MRNIQIALTKGRLEKHVIPLFEQIGIDCSELKNKGRKLVFQSKNTDISFILVKAVDVATYVEHGVADIGVVGKDILMENEKDIYEMLDLGVGVCKFCVASIPTYNPKSYRKKCIATKYPHITSNYFHNKGEDVEIIKIEGSVEIAPILGLADAIVDIVETGKTLQENGLIVFEEMYSISARMIVNKAALKTKKDEIFSIINMMEQEILSGK</sequence>
<organism>
    <name type="scientific">Bacillus anthracis</name>
    <dbReference type="NCBI Taxonomy" id="1392"/>
    <lineage>
        <taxon>Bacteria</taxon>
        <taxon>Bacillati</taxon>
        <taxon>Bacillota</taxon>
        <taxon>Bacilli</taxon>
        <taxon>Bacillales</taxon>
        <taxon>Bacillaceae</taxon>
        <taxon>Bacillus</taxon>
        <taxon>Bacillus cereus group</taxon>
    </lineage>
</organism>
<gene>
    <name evidence="1" type="primary">hisG</name>
    <name type="ordered locus">BA_1425</name>
    <name type="ordered locus">GBAA_1425</name>
    <name type="ordered locus">BAS1316</name>
</gene>
<protein>
    <recommendedName>
        <fullName evidence="1">ATP phosphoribosyltransferase</fullName>
        <shortName evidence="1">ATP-PRT</shortName>
        <shortName evidence="1">ATP-PRTase</shortName>
        <ecNumber evidence="1">2.4.2.17</ecNumber>
    </recommendedName>
</protein>
<accession>Q81T63</accession>
<accession>Q6I1E6</accession>
<accession>Q6KV92</accession>
<evidence type="ECO:0000255" key="1">
    <source>
        <dbReference type="HAMAP-Rule" id="MF_01018"/>
    </source>
</evidence>
<name>HIS1_BACAN</name>
<proteinExistence type="inferred from homology"/>
<dbReference type="EC" id="2.4.2.17" evidence="1"/>
<dbReference type="EMBL" id="AE016879">
    <property type="protein sequence ID" value="AAP25368.1"/>
    <property type="molecule type" value="Genomic_DNA"/>
</dbReference>
<dbReference type="EMBL" id="AE017334">
    <property type="protein sequence ID" value="AAT30521.1"/>
    <property type="molecule type" value="Genomic_DNA"/>
</dbReference>
<dbReference type="EMBL" id="AE017225">
    <property type="protein sequence ID" value="AAT53636.1"/>
    <property type="molecule type" value="Genomic_DNA"/>
</dbReference>
<dbReference type="RefSeq" id="NP_843882.1">
    <property type="nucleotide sequence ID" value="NC_003997.3"/>
</dbReference>
<dbReference type="RefSeq" id="WP_001244471.1">
    <property type="nucleotide sequence ID" value="NZ_WXXJ01000017.1"/>
</dbReference>
<dbReference type="RefSeq" id="YP_027585.1">
    <property type="nucleotide sequence ID" value="NC_005945.1"/>
</dbReference>
<dbReference type="SMR" id="Q81T63"/>
<dbReference type="STRING" id="261594.GBAA_1425"/>
<dbReference type="DNASU" id="1087400"/>
<dbReference type="GeneID" id="45021404"/>
<dbReference type="KEGG" id="ban:BA_1425"/>
<dbReference type="KEGG" id="bar:GBAA_1425"/>
<dbReference type="KEGG" id="bat:BAS1316"/>
<dbReference type="PATRIC" id="fig|198094.11.peg.1398"/>
<dbReference type="eggNOG" id="COG0040">
    <property type="taxonomic scope" value="Bacteria"/>
</dbReference>
<dbReference type="HOGENOM" id="CLU_038115_2_0_9"/>
<dbReference type="OMA" id="YVMMDYD"/>
<dbReference type="OrthoDB" id="9801867at2"/>
<dbReference type="UniPathway" id="UPA00031">
    <property type="reaction ID" value="UER00006"/>
</dbReference>
<dbReference type="Proteomes" id="UP000000427">
    <property type="component" value="Chromosome"/>
</dbReference>
<dbReference type="Proteomes" id="UP000000594">
    <property type="component" value="Chromosome"/>
</dbReference>
<dbReference type="GO" id="GO:0005737">
    <property type="term" value="C:cytoplasm"/>
    <property type="evidence" value="ECO:0007669"/>
    <property type="project" value="UniProtKB-SubCell"/>
</dbReference>
<dbReference type="GO" id="GO:0005524">
    <property type="term" value="F:ATP binding"/>
    <property type="evidence" value="ECO:0007669"/>
    <property type="project" value="UniProtKB-KW"/>
</dbReference>
<dbReference type="GO" id="GO:0003879">
    <property type="term" value="F:ATP phosphoribosyltransferase activity"/>
    <property type="evidence" value="ECO:0007669"/>
    <property type="project" value="UniProtKB-UniRule"/>
</dbReference>
<dbReference type="GO" id="GO:0000105">
    <property type="term" value="P:L-histidine biosynthetic process"/>
    <property type="evidence" value="ECO:0007669"/>
    <property type="project" value="UniProtKB-UniRule"/>
</dbReference>
<dbReference type="CDD" id="cd13595">
    <property type="entry name" value="PBP2_HisGs"/>
    <property type="match status" value="1"/>
</dbReference>
<dbReference type="FunFam" id="3.40.190.10:FF:000011">
    <property type="entry name" value="ATP phosphoribosyltransferase"/>
    <property type="match status" value="1"/>
</dbReference>
<dbReference type="Gene3D" id="3.40.190.10">
    <property type="entry name" value="Periplasmic binding protein-like II"/>
    <property type="match status" value="2"/>
</dbReference>
<dbReference type="HAMAP" id="MF_01018">
    <property type="entry name" value="HisG_Short"/>
    <property type="match status" value="1"/>
</dbReference>
<dbReference type="InterPro" id="IPR013820">
    <property type="entry name" value="ATP_PRibTrfase_cat"/>
</dbReference>
<dbReference type="InterPro" id="IPR018198">
    <property type="entry name" value="ATP_PRibTrfase_CS"/>
</dbReference>
<dbReference type="InterPro" id="IPR001348">
    <property type="entry name" value="ATP_PRibTrfase_HisG"/>
</dbReference>
<dbReference type="InterPro" id="IPR024893">
    <property type="entry name" value="ATP_PRibTrfase_HisG_short"/>
</dbReference>
<dbReference type="NCBIfam" id="TIGR00070">
    <property type="entry name" value="hisG"/>
    <property type="match status" value="1"/>
</dbReference>
<dbReference type="PANTHER" id="PTHR21403:SF8">
    <property type="entry name" value="ATP PHOSPHORIBOSYLTRANSFERASE"/>
    <property type="match status" value="1"/>
</dbReference>
<dbReference type="PANTHER" id="PTHR21403">
    <property type="entry name" value="ATP PHOSPHORIBOSYLTRANSFERASE ATP-PRTASE"/>
    <property type="match status" value="1"/>
</dbReference>
<dbReference type="Pfam" id="PF01634">
    <property type="entry name" value="HisG"/>
    <property type="match status" value="1"/>
</dbReference>
<dbReference type="SUPFAM" id="SSF53850">
    <property type="entry name" value="Periplasmic binding protein-like II"/>
    <property type="match status" value="1"/>
</dbReference>
<dbReference type="PROSITE" id="PS01316">
    <property type="entry name" value="ATP_P_PHORIBOSYLTR"/>
    <property type="match status" value="1"/>
</dbReference>
<comment type="function">
    <text evidence="1">Catalyzes the condensation of ATP and 5-phosphoribose 1-diphosphate to form N'-(5'-phosphoribosyl)-ATP (PR-ATP). Has a crucial role in the pathway because the rate of histidine biosynthesis seems to be controlled primarily by regulation of HisG enzymatic activity.</text>
</comment>
<comment type="catalytic activity">
    <reaction evidence="1">
        <text>1-(5-phospho-beta-D-ribosyl)-ATP + diphosphate = 5-phospho-alpha-D-ribose 1-diphosphate + ATP</text>
        <dbReference type="Rhea" id="RHEA:18473"/>
        <dbReference type="ChEBI" id="CHEBI:30616"/>
        <dbReference type="ChEBI" id="CHEBI:33019"/>
        <dbReference type="ChEBI" id="CHEBI:58017"/>
        <dbReference type="ChEBI" id="CHEBI:73183"/>
        <dbReference type="EC" id="2.4.2.17"/>
    </reaction>
</comment>
<comment type="pathway">
    <text evidence="1">Amino-acid biosynthesis; L-histidine biosynthesis; L-histidine from 5-phospho-alpha-D-ribose 1-diphosphate: step 1/9.</text>
</comment>
<comment type="subunit">
    <text evidence="1">Heteromultimer composed of HisG and HisZ subunits.</text>
</comment>
<comment type="subcellular location">
    <subcellularLocation>
        <location evidence="1">Cytoplasm</location>
    </subcellularLocation>
</comment>
<comment type="domain">
    <text>Lacks the C-terminal regulatory region which is replaced by HisZ.</text>
</comment>
<comment type="similarity">
    <text evidence="1">Belongs to the ATP phosphoribosyltransferase family. Short subfamily.</text>
</comment>